<accession>P0DW53</accession>
<dbReference type="EC" id="4.2.-.-" evidence="6"/>
<dbReference type="EMBL" id="LIQG01000020">
    <property type="status" value="NOT_ANNOTATED_CDS"/>
    <property type="molecule type" value="Genomic_DNA"/>
</dbReference>
<dbReference type="SMR" id="P0DW53"/>
<dbReference type="GO" id="GO:0051539">
    <property type="term" value="F:4 iron, 4 sulfur cluster binding"/>
    <property type="evidence" value="ECO:0007669"/>
    <property type="project" value="UniProtKB-KW"/>
</dbReference>
<dbReference type="GO" id="GO:0005524">
    <property type="term" value="F:ATP binding"/>
    <property type="evidence" value="ECO:0007669"/>
    <property type="project" value="UniProtKB-KW"/>
</dbReference>
<dbReference type="GO" id="GO:0016829">
    <property type="term" value="F:lyase activity"/>
    <property type="evidence" value="ECO:0007669"/>
    <property type="project" value="UniProtKB-KW"/>
</dbReference>
<dbReference type="GO" id="GO:0046872">
    <property type="term" value="F:metal ion binding"/>
    <property type="evidence" value="ECO:0007669"/>
    <property type="project" value="UniProtKB-KW"/>
</dbReference>
<dbReference type="GO" id="GO:0051607">
    <property type="term" value="P:defense response to virus"/>
    <property type="evidence" value="ECO:0007669"/>
    <property type="project" value="UniProtKB-KW"/>
</dbReference>
<dbReference type="CDD" id="cd01335">
    <property type="entry name" value="Radical_SAM"/>
    <property type="match status" value="1"/>
</dbReference>
<dbReference type="Gene3D" id="3.20.20.70">
    <property type="entry name" value="Aldolase class I"/>
    <property type="match status" value="1"/>
</dbReference>
<dbReference type="Gene3D" id="3.40.50.300">
    <property type="entry name" value="P-loop containing nucleotide triphosphate hydrolases"/>
    <property type="match status" value="1"/>
</dbReference>
<dbReference type="InterPro" id="IPR013785">
    <property type="entry name" value="Aldolase_TIM"/>
</dbReference>
<dbReference type="InterPro" id="IPR006638">
    <property type="entry name" value="Elp3/MiaA/NifB-like_rSAM"/>
</dbReference>
<dbReference type="InterPro" id="IPR027417">
    <property type="entry name" value="P-loop_NTPase"/>
</dbReference>
<dbReference type="InterPro" id="IPR051196">
    <property type="entry name" value="RSAD2/Viperin_antiviral"/>
</dbReference>
<dbReference type="InterPro" id="IPR007197">
    <property type="entry name" value="rSAM"/>
</dbReference>
<dbReference type="NCBIfam" id="NF038283">
    <property type="entry name" value="viperin_w_prok"/>
    <property type="match status" value="1"/>
</dbReference>
<dbReference type="PANTHER" id="PTHR21339">
    <property type="entry name" value="RADICAL S-ADENOSYL METHIONINE DOMAIN-CONTAINING PROTEIN 2"/>
    <property type="match status" value="1"/>
</dbReference>
<dbReference type="PANTHER" id="PTHR21339:SF0">
    <property type="entry name" value="S-ADENOSYLMETHIONINE-DEPENDENT NUCLEOTIDE DEHYDRATASE RSAD2"/>
    <property type="match status" value="1"/>
</dbReference>
<dbReference type="Pfam" id="PF13189">
    <property type="entry name" value="Cytidylate_kin2"/>
    <property type="match status" value="1"/>
</dbReference>
<dbReference type="Pfam" id="PF13353">
    <property type="entry name" value="Fer4_12"/>
    <property type="match status" value="1"/>
</dbReference>
<dbReference type="Pfam" id="PF04055">
    <property type="entry name" value="Radical_SAM"/>
    <property type="match status" value="1"/>
</dbReference>
<dbReference type="SFLD" id="SFLDG01088">
    <property type="entry name" value="antiviral_proteins"/>
    <property type="match status" value="1"/>
</dbReference>
<dbReference type="SFLD" id="SFLDS00029">
    <property type="entry name" value="Radical_SAM"/>
    <property type="match status" value="1"/>
</dbReference>
<dbReference type="SFLD" id="SFLDG01067">
    <property type="entry name" value="SPASM/twitch_domain_containing"/>
    <property type="match status" value="1"/>
</dbReference>
<dbReference type="SMART" id="SM00729">
    <property type="entry name" value="Elp3"/>
    <property type="match status" value="1"/>
</dbReference>
<dbReference type="SUPFAM" id="SSF52540">
    <property type="entry name" value="P-loop containing nucleoside triphosphate hydrolases"/>
    <property type="match status" value="1"/>
</dbReference>
<dbReference type="SUPFAM" id="SSF102114">
    <property type="entry name" value="Radical SAM enzymes"/>
    <property type="match status" value="1"/>
</dbReference>
<dbReference type="PROSITE" id="PS51918">
    <property type="entry name" value="RADICAL_SAM"/>
    <property type="match status" value="1"/>
</dbReference>
<sequence length="476" mass="54537">MKTKITLSGFAGTGKSTVGKRIQEQLNFEFVSVGNYSRQYAMEKYGLTINEFQEQCKAQPELDNEIDEKFRLECNSKENLVIDYRLGFHFIKNAFHVLLKVSDESASKRIRLANRSDEVTSTKAIQQRNQKMRDRFQDNYGVDFTNDKNYDLVIDTDDLTANEVADLIIEHYQKSNAVSKIPSVNFHLWQPCNMRCKFCFATFLDVKQEYVPKGHLPEDEALEVVRKIAAAGFEKITFAGGEPLLCKWLPKLIKTAKQLGMTTMIVTNGSKLTDSFLKENKAYLDWIAVSIDSLDEENNIKIGRAITGKKPLSKAFYYDLIDKIHQYGYGLKINTVVNKVNYKDNLASFIAKAKPKRWKVLQVLPIKGQNDNKIDAFKITDEEYANFLDTHKDVETIVPESNDEIKGSYVMVDPAGRFFDNAAGTHNYSKPILEVGIQEALKTMNYDLDKFLNRGGVYNWNTNKNQDLRKEEVSYE</sequence>
<reference evidence="7" key="1">
    <citation type="journal article" date="2016" name="PLoS ONE">
        <title>Comparative Analysis of Lacinutrix Genomes and Their Association with Bacterial Habitat.</title>
        <authorList>
            <person name="Lee Y.M."/>
            <person name="Kim M.K."/>
            <person name="Ahn D.W."/>
            <person name="Kim H.W."/>
            <person name="Park H."/>
            <person name="Shin S.C."/>
        </authorList>
    </citation>
    <scope>NUCLEOTIDE SEQUENCE [LARGE SCALE GENOMIC DNA]</scope>
    <source>
        <strain>JCM 13824 / KCCM 42306 / AKS432</strain>
    </source>
</reference>
<reference key="2">
    <citation type="journal article" date="2021" name="Nature">
        <title>Prokaryotic viperins produce diverse antiviral molecules.</title>
        <authorList>
            <person name="Bernheim A."/>
            <person name="Millman A."/>
            <person name="Ofir G."/>
            <person name="Meitav G."/>
            <person name="Avraham C."/>
            <person name="Shomar H."/>
            <person name="Rosenberg M.M."/>
            <person name="Tal N."/>
            <person name="Melamed S."/>
            <person name="Amitai G."/>
            <person name="Sorek R."/>
        </authorList>
    </citation>
    <scope>FUNCTION IN ANTIVIRAL DEFENSE</scope>
    <scope>FUNCTION IN DDHGTP SYNTHESIS</scope>
    <scope>PROBABLE CATALYTIC ACTIVITY</scope>
    <scope>PROBABLE COFACTOR</scope>
    <scope>MUTAGENESIS OF 192-CYS--CYS-199</scope>
    <source>
        <strain>JCM 13824 / KCCM 42306 / AKS432</strain>
    </source>
</reference>
<reference key="3">
    <citation type="journal article" date="2022" name="Front. Mol. Biosci.">
        <title>Radical-SAM dependent nucleotide dehydratase (SAND), rectification of the names of an ancient iron-sulfur enzyme using NC-IUBMB recommendations.</title>
        <authorList>
            <person name="Ji Y."/>
            <person name="Wei L."/>
            <person name="Da A."/>
            <person name="Stark H."/>
            <person name="Hagedoorn P.-L."/>
            <person name="Ciofi-Baffoni S."/>
            <person name="Cowley S.A."/>
            <person name="Louro R.O."/>
            <person name="Todorovic S."/>
            <person name="Mroginski M.A."/>
            <person name="Nicolet Y."/>
            <person name="Roessler M.M."/>
            <person name="Le Brun N.E."/>
            <person name="Piccioli M."/>
            <person name="James W.S."/>
            <person name="Hagen W.R."/>
            <person name="Ebrahimi K.H."/>
        </authorList>
    </citation>
    <scope>NOMENCLATURE</scope>
</reference>
<evidence type="ECO:0000255" key="1">
    <source>
        <dbReference type="PROSITE-ProRule" id="PRU01266"/>
    </source>
</evidence>
<evidence type="ECO:0000269" key="2">
    <source>
    </source>
</evidence>
<evidence type="ECO:0000303" key="3">
    <source>
    </source>
</evidence>
<evidence type="ECO:0000303" key="4">
    <source>
    </source>
</evidence>
<evidence type="ECO:0000305" key="5"/>
<evidence type="ECO:0000305" key="6">
    <source>
    </source>
</evidence>
<evidence type="ECO:0000312" key="7">
    <source>
        <dbReference type="EMBL" id="LIQG01000020"/>
    </source>
</evidence>
<name>SAND_LACM4</name>
<feature type="chain" id="PRO_0000456425" description="S-adenosylmethionine-dependent nucleotide dehydratase">
    <location>
        <begin position="1"/>
        <end position="476"/>
    </location>
</feature>
<feature type="domain" description="Radical SAM core" evidence="1">
    <location>
        <begin position="176"/>
        <end position="400"/>
    </location>
</feature>
<feature type="region of interest" description="Cytidylate kinase-like domain" evidence="5">
    <location>
        <begin position="1"/>
        <end position="168"/>
    </location>
</feature>
<feature type="region of interest" description="Prokaryotic viperin domain" evidence="5">
    <location>
        <begin position="183"/>
        <end position="476"/>
    </location>
</feature>
<feature type="binding site" evidence="5">
    <location>
        <begin position="9"/>
        <end position="17"/>
    </location>
    <ligand>
        <name>ATP</name>
        <dbReference type="ChEBI" id="CHEBI:30616"/>
    </ligand>
</feature>
<feature type="binding site" evidence="1 6">
    <location>
        <position position="192"/>
    </location>
    <ligand>
        <name>[4Fe-4S] cluster</name>
        <dbReference type="ChEBI" id="CHEBI:49883"/>
        <note>4Fe-4S-S-AdoMet</note>
    </ligand>
</feature>
<feature type="binding site" evidence="1 6">
    <location>
        <position position="196"/>
    </location>
    <ligand>
        <name>[4Fe-4S] cluster</name>
        <dbReference type="ChEBI" id="CHEBI:49883"/>
        <note>4Fe-4S-S-AdoMet</note>
    </ligand>
</feature>
<feature type="binding site" evidence="1 6">
    <location>
        <position position="199"/>
    </location>
    <ligand>
        <name>[4Fe-4S] cluster</name>
        <dbReference type="ChEBI" id="CHEBI:49883"/>
        <note>4Fe-4S-S-AdoMet</note>
    </ligand>
</feature>
<feature type="mutagenesis site" description="No longer protects against T7, no longer represses T7 promoter." evidence="2">
    <original>CNMRCKFC</original>
    <variation>ANMRAKFA</variation>
    <location>
        <begin position="192"/>
        <end position="199"/>
    </location>
</feature>
<comment type="function">
    <text evidence="2">Expression of pVip60 in E.coli (strain MG1655) confers resistance to phage T7; prevents culture collapse upon infection. Catalyzes the conversion of guanosine triphosphate (GTP) to 3'-deoxy-3',4'-didehydro-GTP (ddhGTP), probably via a SAM-dependent radical mechanism. The modified nucleotide represses transcription from T7 RNA polymerase-directed genes (possibly by acting as chain terminators), strongly suggesting these nucleotides block viral polymerase transcription.</text>
</comment>
<comment type="function">
    <text evidence="6">The N-terminus of the protein may generate NTP for use by the viperin domain.</text>
</comment>
<comment type="catalytic activity">
    <reaction evidence="6">
        <text>GTP + AH2 + S-adenosyl-L-methionine = 3'-deoxy-3',4'-didehydro-GTP + 5'-deoxyadenosine + L-methionine + A + H2O + H(+)</text>
        <dbReference type="Rhea" id="RHEA:72143"/>
        <dbReference type="ChEBI" id="CHEBI:13193"/>
        <dbReference type="ChEBI" id="CHEBI:15377"/>
        <dbReference type="ChEBI" id="CHEBI:15378"/>
        <dbReference type="ChEBI" id="CHEBI:17319"/>
        <dbReference type="ChEBI" id="CHEBI:17499"/>
        <dbReference type="ChEBI" id="CHEBI:37565"/>
        <dbReference type="ChEBI" id="CHEBI:57844"/>
        <dbReference type="ChEBI" id="CHEBI:59789"/>
        <dbReference type="ChEBI" id="CHEBI:191857"/>
    </reaction>
    <physiologicalReaction direction="left-to-right" evidence="6">
        <dbReference type="Rhea" id="RHEA:72144"/>
    </physiologicalReaction>
</comment>
<comment type="cofactor">
    <cofactor evidence="1 6">
        <name>[4Fe-4S] cluster</name>
        <dbReference type="ChEBI" id="CHEBI:49883"/>
    </cofactor>
</comment>
<comment type="similarity">
    <text evidence="6">In the N-terminal section; belongs to the cytidylate kinase-like family.</text>
</comment>
<comment type="similarity">
    <text evidence="6">In the C-terminal section; belongs to the radical SAM superfamily. Viperin family.</text>
</comment>
<protein>
    <recommendedName>
        <fullName evidence="4">S-adenosylmethionine-dependent nucleotide dehydratase</fullName>
        <shortName evidence="4">SAND</shortName>
        <ecNumber evidence="6">4.2.-.-</ecNumber>
    </recommendedName>
    <alternativeName>
        <fullName evidence="3">Prokaryotic viperin protein pVip60</fullName>
        <shortName evidence="3">pVip60</shortName>
    </alternativeName>
    <alternativeName>
        <fullName evidence="5">Putative nucleotide kinase-viperin fusion protein pVip60</fullName>
    </alternativeName>
</protein>
<gene>
    <name evidence="5" type="primary">vip60</name>
    <name evidence="7" type="ORF">Ga0128987_120225</name>
</gene>
<organism>
    <name type="scientific">Lacinutrix mariniflava (strain JCM 13824 / KCCM 42306 / AKS432)</name>
    <dbReference type="NCBI Taxonomy" id="1469558"/>
    <lineage>
        <taxon>Bacteria</taxon>
        <taxon>Pseudomonadati</taxon>
        <taxon>Bacteroidota</taxon>
        <taxon>Flavobacteriia</taxon>
        <taxon>Flavobacteriales</taxon>
        <taxon>Flavobacteriaceae</taxon>
        <taxon>Lacinutrix</taxon>
    </lineage>
</organism>
<keyword id="KW-0004">4Fe-4S</keyword>
<keyword id="KW-0051">Antiviral defense</keyword>
<keyword id="KW-0067">ATP-binding</keyword>
<keyword id="KW-0408">Iron</keyword>
<keyword id="KW-0411">Iron-sulfur</keyword>
<keyword id="KW-0456">Lyase</keyword>
<keyword id="KW-0479">Metal-binding</keyword>
<keyword id="KW-0511">Multifunctional enzyme</keyword>
<keyword id="KW-0547">Nucleotide-binding</keyword>
<keyword id="KW-0949">S-adenosyl-L-methionine</keyword>
<proteinExistence type="evidence at protein level"/>